<accession>Q84UC7</accession>
<accession>P93016</accession>
<reference key="1">
    <citation type="journal article" date="2003" name="Plant J.">
        <title>Identification of a mitochondrial transporter for basic amino acids in Arabidopsis thaliana by functional reconstitution into liposomes and complementation in yeast.</title>
        <authorList>
            <person name="Hoyos M.E."/>
            <person name="Palmieri L."/>
            <person name="Wertin T."/>
            <person name="Arrigoni R."/>
            <person name="Polacco J.C."/>
            <person name="Palmieri F."/>
        </authorList>
    </citation>
    <scope>NUCLEOTIDE SEQUENCE [MRNA]</scope>
    <scope>FUNCTION</scope>
    <scope>ACTIVITY REGULATION</scope>
    <scope>BIOPHYSICOCHEMICAL PROPERTIES</scope>
    <scope>TISSUE SPECIFICITY</scope>
    <source>
        <strain>cv. Landsberg erecta</strain>
    </source>
</reference>
<reference key="2">
    <citation type="journal article" date="1999" name="Nature">
        <title>Sequence and analysis of chromosome 2 of the plant Arabidopsis thaliana.</title>
        <authorList>
            <person name="Lin X."/>
            <person name="Kaul S."/>
            <person name="Rounsley S.D."/>
            <person name="Shea T.P."/>
            <person name="Benito M.-I."/>
            <person name="Town C.D."/>
            <person name="Fujii C.Y."/>
            <person name="Mason T.M."/>
            <person name="Bowman C.L."/>
            <person name="Barnstead M.E."/>
            <person name="Feldblyum T.V."/>
            <person name="Buell C.R."/>
            <person name="Ketchum K.A."/>
            <person name="Lee J.J."/>
            <person name="Ronning C.M."/>
            <person name="Koo H.L."/>
            <person name="Moffat K.S."/>
            <person name="Cronin L.A."/>
            <person name="Shen M."/>
            <person name="Pai G."/>
            <person name="Van Aken S."/>
            <person name="Umayam L."/>
            <person name="Tallon L.J."/>
            <person name="Gill J.E."/>
            <person name="Adams M.D."/>
            <person name="Carrera A.J."/>
            <person name="Creasy T.H."/>
            <person name="Goodman H.M."/>
            <person name="Somerville C.R."/>
            <person name="Copenhaver G.P."/>
            <person name="Preuss D."/>
            <person name="Nierman W.C."/>
            <person name="White O."/>
            <person name="Eisen J.A."/>
            <person name="Salzberg S.L."/>
            <person name="Fraser C.M."/>
            <person name="Venter J.C."/>
        </authorList>
    </citation>
    <scope>NUCLEOTIDE SEQUENCE [LARGE SCALE GENOMIC DNA]</scope>
    <source>
        <strain>cv. Columbia</strain>
    </source>
</reference>
<reference key="3">
    <citation type="journal article" date="2017" name="Plant J.">
        <title>Araport11: a complete reannotation of the Arabidopsis thaliana reference genome.</title>
        <authorList>
            <person name="Cheng C.Y."/>
            <person name="Krishnakumar V."/>
            <person name="Chan A.P."/>
            <person name="Thibaud-Nissen F."/>
            <person name="Schobel S."/>
            <person name="Town C.D."/>
        </authorList>
    </citation>
    <scope>GENOME REANNOTATION</scope>
    <source>
        <strain>cv. Columbia</strain>
    </source>
</reference>
<reference key="4">
    <citation type="submission" date="2006-06" db="EMBL/GenBank/DDBJ databases">
        <title>Arabidopsis ORF clones.</title>
        <authorList>
            <person name="Quinitio C."/>
            <person name="Chen H."/>
            <person name="Kim C.J."/>
            <person name="Shinn P."/>
            <person name="Ecker J.R."/>
        </authorList>
    </citation>
    <scope>NUCLEOTIDE SEQUENCE [LARGE SCALE MRNA]</scope>
    <source>
        <strain>cv. Columbia</strain>
    </source>
</reference>
<reference key="5">
    <citation type="journal article" date="2004" name="Trends Plant Sci.">
        <title>The growing family of mitochondrial carriers in Arabidopsis.</title>
        <authorList>
            <person name="Picault N."/>
            <person name="Hodges M."/>
            <person name="Palmieri L."/>
            <person name="Palmieri F."/>
        </authorList>
    </citation>
    <scope>GENE FAMILY</scope>
</reference>
<reference key="6">
    <citation type="journal article" date="2006" name="Biochim. Biophys. Acta">
        <title>Arabidopsis mitochondria have two basic amino acid transporters with partially overlapping specificities and differential expression in seedling development.</title>
        <authorList>
            <person name="Palmieri L."/>
            <person name="Todd C.D."/>
            <person name="Arrigoni R."/>
            <person name="Hoyos M.E."/>
            <person name="Santoro A."/>
            <person name="Polacco J.C."/>
            <person name="Palmieri F."/>
        </authorList>
    </citation>
    <scope>FUNCTION</scope>
    <scope>BIOPHYSICOCHEMICAL PROPERTIES</scope>
</reference>
<feature type="chain" id="PRO_0000420758" description="Mitochondrial arginine transporter BAC1">
    <location>
        <begin position="1"/>
        <end position="311"/>
    </location>
</feature>
<feature type="transmembrane region" description="Helical; Name=1" evidence="2">
    <location>
        <begin position="18"/>
        <end position="38"/>
    </location>
</feature>
<feature type="transmembrane region" description="Helical; Name=2" evidence="2">
    <location>
        <begin position="76"/>
        <end position="96"/>
    </location>
</feature>
<feature type="transmembrane region" description="Helical; Name=3" evidence="2">
    <location>
        <begin position="113"/>
        <end position="133"/>
    </location>
</feature>
<feature type="transmembrane region" description="Helical; Name=4" evidence="2">
    <location>
        <begin position="178"/>
        <end position="197"/>
    </location>
</feature>
<feature type="transmembrane region" description="Helical; Name=5" evidence="2">
    <location>
        <begin position="222"/>
        <end position="242"/>
    </location>
</feature>
<feature type="transmembrane region" description="Helical; Name=6" evidence="2">
    <location>
        <begin position="288"/>
        <end position="308"/>
    </location>
</feature>
<feature type="repeat" description="Solcar 1">
    <location>
        <begin position="12"/>
        <end position="101"/>
    </location>
</feature>
<feature type="repeat" description="Solcar 2">
    <location>
        <begin position="111"/>
        <end position="203"/>
    </location>
</feature>
<feature type="repeat" description="Solcar 3">
    <location>
        <begin position="219"/>
        <end position="305"/>
    </location>
</feature>
<sequence>MGESKTTTGEGFGFYKEYVAGMMAGLATVAVGHPFDTVKVKLQKHNTDVQGLRYKNGLHCASRILQTEGVKGLYRGATSSFMGMAFESSLMFGIYSQAKLFLRGTLPDDGPRPEIIVPSAMFGGAIISFVLCPTELVKCRMQIQGTDSLVPNFRRYNSPLDCAVQTVKNDGVTGIFRGGSATLLRECTGNAVFFTVYEYLRYHIHSRLEDSKLKDGYLVDMGIGVLTGGLGGIACWSAVLPFDVAKTIIQTSSEKATERNPFKVLSSIHKRAGLKGCYAGLGPTIVRAFPANAAAIVAWEFSMKMLGIKRD</sequence>
<gene>
    <name type="primary">BAC1</name>
    <name type="synonym">MBAC1</name>
    <name type="ordered locus">At2g33820</name>
    <name type="ORF">T1B8.12</name>
</gene>
<name>BAC1_ARATH</name>
<comment type="function">
    <text evidence="3 4">Mitochondrial arginine transporter that catalyzes the counter-exchange of arginine with lysine, ornithine, arginine and histidine. Substrate preference in reconstituted proteoliposomes is arginine &gt; lysine &gt; ornithine &gt; histidine. May be involved in the delivery of arginine, released from seed reserves, to mitochondrial arginase and the export of ornithine.</text>
</comment>
<comment type="activity regulation">
    <text evidence="3">Inhibited by mercuric chloride.</text>
</comment>
<comment type="biophysicochemical properties">
    <kinetics>
        <KM evidence="3 4">0.19 mM for arginine (for the recombinant protein in reconstituted proteoliposomes)</KM>
        <KM evidence="3 4">0.68 mM for lysine (for the recombinant protein in reconstituted proteoliposomes)</KM>
        <KM evidence="3 4">2.17 mM for ornithine (for the recombinant protein in reconstituted proteoliposomes)</KM>
        <Vmax evidence="3 4">48.0 umol/min/g enzyme toward arginine (for the recombinant protein in reconstituted proteoliposomes)</Vmax>
    </kinetics>
    <phDependence>
        <text evidence="3 4">Optimum pH is 7.0-9.0.</text>
    </phDependence>
</comment>
<comment type="subcellular location">
    <subcellularLocation>
        <location evidence="1">Mitochondrion inner membrane</location>
        <topology evidence="1">Multi-pass membrane protein</topology>
    </subcellularLocation>
</comment>
<comment type="tissue specificity">
    <text evidence="3">High expression in flowers and siliques. Lower expression in leaves and stems.</text>
</comment>
<comment type="similarity">
    <text evidence="5">Belongs to the mitochondrial carrier (TC 2.A.29) family.</text>
</comment>
<comment type="sequence caution" evidence="5">
    <conflict type="erroneous gene model prediction">
        <sequence resource="EMBL-CDS" id="AAC69138"/>
    </conflict>
</comment>
<keyword id="KW-0472">Membrane</keyword>
<keyword id="KW-0496">Mitochondrion</keyword>
<keyword id="KW-0999">Mitochondrion inner membrane</keyword>
<keyword id="KW-1185">Reference proteome</keyword>
<keyword id="KW-0677">Repeat</keyword>
<keyword id="KW-0812">Transmembrane</keyword>
<keyword id="KW-1133">Transmembrane helix</keyword>
<keyword id="KW-0813">Transport</keyword>
<organism>
    <name type="scientific">Arabidopsis thaliana</name>
    <name type="common">Mouse-ear cress</name>
    <dbReference type="NCBI Taxonomy" id="3702"/>
    <lineage>
        <taxon>Eukaryota</taxon>
        <taxon>Viridiplantae</taxon>
        <taxon>Streptophyta</taxon>
        <taxon>Embryophyta</taxon>
        <taxon>Tracheophyta</taxon>
        <taxon>Spermatophyta</taxon>
        <taxon>Magnoliopsida</taxon>
        <taxon>eudicotyledons</taxon>
        <taxon>Gunneridae</taxon>
        <taxon>Pentapetalae</taxon>
        <taxon>rosids</taxon>
        <taxon>malvids</taxon>
        <taxon>Brassicales</taxon>
        <taxon>Brassicaceae</taxon>
        <taxon>Camelineae</taxon>
        <taxon>Arabidopsis</taxon>
    </lineage>
</organism>
<evidence type="ECO:0000250" key="1"/>
<evidence type="ECO:0000255" key="2"/>
<evidence type="ECO:0000269" key="3">
    <source>
    </source>
</evidence>
<evidence type="ECO:0000269" key="4">
    <source>
    </source>
</evidence>
<evidence type="ECO:0000305" key="5"/>
<proteinExistence type="evidence at protein level"/>
<dbReference type="EMBL" id="AY186582">
    <property type="protein sequence ID" value="AAO32062.1"/>
    <property type="molecule type" value="mRNA"/>
</dbReference>
<dbReference type="EMBL" id="U78721">
    <property type="protein sequence ID" value="AAC69138.1"/>
    <property type="status" value="ALT_SEQ"/>
    <property type="molecule type" value="Genomic_DNA"/>
</dbReference>
<dbReference type="EMBL" id="CP002685">
    <property type="protein sequence ID" value="AEC08890.1"/>
    <property type="molecule type" value="Genomic_DNA"/>
</dbReference>
<dbReference type="EMBL" id="BT025874">
    <property type="protein sequence ID" value="ABF85776.1"/>
    <property type="molecule type" value="mRNA"/>
</dbReference>
<dbReference type="PIR" id="A84750">
    <property type="entry name" value="A84750"/>
</dbReference>
<dbReference type="RefSeq" id="NP_180938.2">
    <property type="nucleotide sequence ID" value="NM_128941.3"/>
</dbReference>
<dbReference type="SMR" id="Q84UC7"/>
<dbReference type="BioGRID" id="3296">
    <property type="interactions" value="1"/>
</dbReference>
<dbReference type="FunCoup" id="Q84UC7">
    <property type="interactions" value="229"/>
</dbReference>
<dbReference type="STRING" id="3702.Q84UC7"/>
<dbReference type="TCDB" id="2.A.29.8.6">
    <property type="family name" value="the mitochondrial carrier (mc) family"/>
</dbReference>
<dbReference type="PaxDb" id="3702-AT2G33820.1"/>
<dbReference type="EnsemblPlants" id="AT2G33820.1">
    <property type="protein sequence ID" value="AT2G33820.1"/>
    <property type="gene ID" value="AT2G33820"/>
</dbReference>
<dbReference type="GeneID" id="817949"/>
<dbReference type="Gramene" id="AT2G33820.1">
    <property type="protein sequence ID" value="AT2G33820.1"/>
    <property type="gene ID" value="AT2G33820"/>
</dbReference>
<dbReference type="KEGG" id="ath:AT2G33820"/>
<dbReference type="Araport" id="AT2G33820"/>
<dbReference type="TAIR" id="AT2G33820">
    <property type="gene designation" value="MBAC1"/>
</dbReference>
<dbReference type="eggNOG" id="KOG0758">
    <property type="taxonomic scope" value="Eukaryota"/>
</dbReference>
<dbReference type="HOGENOM" id="CLU_015166_16_3_1"/>
<dbReference type="InParanoid" id="Q84UC7"/>
<dbReference type="OMA" id="PIDCFRQ"/>
<dbReference type="PhylomeDB" id="Q84UC7"/>
<dbReference type="SABIO-RK" id="Q84UC7"/>
<dbReference type="PRO" id="PR:Q84UC7"/>
<dbReference type="Proteomes" id="UP000006548">
    <property type="component" value="Chromosome 2"/>
</dbReference>
<dbReference type="ExpressionAtlas" id="Q84UC7">
    <property type="expression patterns" value="baseline and differential"/>
</dbReference>
<dbReference type="GO" id="GO:0005743">
    <property type="term" value="C:mitochondrial inner membrane"/>
    <property type="evidence" value="ECO:0007669"/>
    <property type="project" value="UniProtKB-SubCell"/>
</dbReference>
<dbReference type="GO" id="GO:0005290">
    <property type="term" value="F:L-histidine transmembrane transporter activity"/>
    <property type="evidence" value="ECO:0000314"/>
    <property type="project" value="TAIR"/>
</dbReference>
<dbReference type="GO" id="GO:0015189">
    <property type="term" value="F:L-lysine transmembrane transporter activity"/>
    <property type="evidence" value="ECO:0000314"/>
    <property type="project" value="TAIR"/>
</dbReference>
<dbReference type="FunFam" id="1.50.40.10:FF:000086">
    <property type="entry name" value="Mitochondrial carrier protein"/>
    <property type="match status" value="1"/>
</dbReference>
<dbReference type="FunFam" id="1.50.40.10:FF:000091">
    <property type="entry name" value="Mitochondrial carrier protein"/>
    <property type="match status" value="1"/>
</dbReference>
<dbReference type="Gene3D" id="1.50.40.10">
    <property type="entry name" value="Mitochondrial carrier domain"/>
    <property type="match status" value="2"/>
</dbReference>
<dbReference type="InterPro" id="IPR050567">
    <property type="entry name" value="Mitochondrial_Carrier"/>
</dbReference>
<dbReference type="InterPro" id="IPR018108">
    <property type="entry name" value="Mitochondrial_sb/sol_carrier"/>
</dbReference>
<dbReference type="InterPro" id="IPR023395">
    <property type="entry name" value="Mt_carrier_dom_sf"/>
</dbReference>
<dbReference type="PANTHER" id="PTHR45624:SF15">
    <property type="entry name" value="MITOCHONDRIAL ARGININE TRANSPORTER BAC1"/>
    <property type="match status" value="1"/>
</dbReference>
<dbReference type="PANTHER" id="PTHR45624">
    <property type="entry name" value="MITOCHONDRIAL BASIC AMINO ACIDS TRANSPORTER-RELATED"/>
    <property type="match status" value="1"/>
</dbReference>
<dbReference type="Pfam" id="PF00153">
    <property type="entry name" value="Mito_carr"/>
    <property type="match status" value="3"/>
</dbReference>
<dbReference type="SUPFAM" id="SSF103506">
    <property type="entry name" value="Mitochondrial carrier"/>
    <property type="match status" value="1"/>
</dbReference>
<dbReference type="PROSITE" id="PS50920">
    <property type="entry name" value="SOLCAR"/>
    <property type="match status" value="3"/>
</dbReference>
<protein>
    <recommendedName>
        <fullName>Mitochondrial arginine transporter BAC1</fullName>
    </recommendedName>
    <alternativeName>
        <fullName>Mitochondrial basic amino acid carrier 1</fullName>
        <shortName>AtMBAC1</shortName>
    </alternativeName>
</protein>